<comment type="catalytic activity">
    <reaction evidence="1">
        <text>1-(5-phospho-beta-D-ribosyl)-ATP + H2O = 1-(5-phospho-beta-D-ribosyl)-5'-AMP + diphosphate + H(+)</text>
        <dbReference type="Rhea" id="RHEA:22828"/>
        <dbReference type="ChEBI" id="CHEBI:15377"/>
        <dbReference type="ChEBI" id="CHEBI:15378"/>
        <dbReference type="ChEBI" id="CHEBI:33019"/>
        <dbReference type="ChEBI" id="CHEBI:59457"/>
        <dbReference type="ChEBI" id="CHEBI:73183"/>
        <dbReference type="EC" id="3.6.1.31"/>
    </reaction>
</comment>
<comment type="pathway">
    <text evidence="1">Amino-acid biosynthesis; L-histidine biosynthesis; L-histidine from 5-phospho-alpha-D-ribose 1-diphosphate: step 2/9.</text>
</comment>
<comment type="subcellular location">
    <subcellularLocation>
        <location evidence="1">Cytoplasm</location>
    </subcellularLocation>
</comment>
<comment type="similarity">
    <text evidence="1">Belongs to the PRA-PH family.</text>
</comment>
<accession>Q57AH2</accession>
<name>HIS2_BRUAB</name>
<protein>
    <recommendedName>
        <fullName evidence="1">Phosphoribosyl-ATP pyrophosphatase</fullName>
        <shortName evidence="1">PRA-PH</shortName>
        <ecNumber evidence="1">3.6.1.31</ecNumber>
    </recommendedName>
</protein>
<organism>
    <name type="scientific">Brucella abortus biovar 1 (strain 9-941)</name>
    <dbReference type="NCBI Taxonomy" id="262698"/>
    <lineage>
        <taxon>Bacteria</taxon>
        <taxon>Pseudomonadati</taxon>
        <taxon>Pseudomonadota</taxon>
        <taxon>Alphaproteobacteria</taxon>
        <taxon>Hyphomicrobiales</taxon>
        <taxon>Brucellaceae</taxon>
        <taxon>Brucella/Ochrobactrum group</taxon>
        <taxon>Brucella</taxon>
    </lineage>
</organism>
<gene>
    <name evidence="1" type="primary">hisE</name>
    <name type="ordered locus">BruAb1_2061</name>
</gene>
<reference key="1">
    <citation type="journal article" date="2005" name="J. Bacteriol.">
        <title>Completion of the genome sequence of Brucella abortus and comparison to the highly similar genomes of Brucella melitensis and Brucella suis.</title>
        <authorList>
            <person name="Halling S.M."/>
            <person name="Peterson-Burch B.D."/>
            <person name="Bricker B.J."/>
            <person name="Zuerner R.L."/>
            <person name="Qing Z."/>
            <person name="Li L.-L."/>
            <person name="Kapur V."/>
            <person name="Alt D.P."/>
            <person name="Olsen S.C."/>
        </authorList>
    </citation>
    <scope>NUCLEOTIDE SEQUENCE [LARGE SCALE GENOMIC DNA]</scope>
    <source>
        <strain>9-941</strain>
    </source>
</reference>
<keyword id="KW-0028">Amino-acid biosynthesis</keyword>
<keyword id="KW-0067">ATP-binding</keyword>
<keyword id="KW-0963">Cytoplasm</keyword>
<keyword id="KW-0368">Histidine biosynthesis</keyword>
<keyword id="KW-0378">Hydrolase</keyword>
<keyword id="KW-0547">Nucleotide-binding</keyword>
<dbReference type="EC" id="3.6.1.31" evidence="1"/>
<dbReference type="EMBL" id="AE017223">
    <property type="protein sequence ID" value="AAX75362.1"/>
    <property type="molecule type" value="Genomic_DNA"/>
</dbReference>
<dbReference type="RefSeq" id="WP_002965152.1">
    <property type="nucleotide sequence ID" value="NC_006932.1"/>
</dbReference>
<dbReference type="SMR" id="Q57AH2"/>
<dbReference type="EnsemblBacteria" id="AAX75362">
    <property type="protein sequence ID" value="AAX75362"/>
    <property type="gene ID" value="BruAb1_2061"/>
</dbReference>
<dbReference type="KEGG" id="bmb:BruAb1_2061"/>
<dbReference type="HOGENOM" id="CLU_123337_1_1_5"/>
<dbReference type="UniPathway" id="UPA00031">
    <property type="reaction ID" value="UER00007"/>
</dbReference>
<dbReference type="Proteomes" id="UP000000540">
    <property type="component" value="Chromosome I"/>
</dbReference>
<dbReference type="GO" id="GO:0005737">
    <property type="term" value="C:cytoplasm"/>
    <property type="evidence" value="ECO:0007669"/>
    <property type="project" value="UniProtKB-SubCell"/>
</dbReference>
<dbReference type="GO" id="GO:0005524">
    <property type="term" value="F:ATP binding"/>
    <property type="evidence" value="ECO:0007669"/>
    <property type="project" value="UniProtKB-KW"/>
</dbReference>
<dbReference type="GO" id="GO:0004636">
    <property type="term" value="F:phosphoribosyl-ATP diphosphatase activity"/>
    <property type="evidence" value="ECO:0007669"/>
    <property type="project" value="UniProtKB-UniRule"/>
</dbReference>
<dbReference type="GO" id="GO:0000105">
    <property type="term" value="P:L-histidine biosynthetic process"/>
    <property type="evidence" value="ECO:0007669"/>
    <property type="project" value="UniProtKB-UniRule"/>
</dbReference>
<dbReference type="CDD" id="cd11534">
    <property type="entry name" value="NTP-PPase_HisIE_like"/>
    <property type="match status" value="1"/>
</dbReference>
<dbReference type="Gene3D" id="1.10.287.1080">
    <property type="entry name" value="MazG-like"/>
    <property type="match status" value="1"/>
</dbReference>
<dbReference type="HAMAP" id="MF_01020">
    <property type="entry name" value="HisE"/>
    <property type="match status" value="1"/>
</dbReference>
<dbReference type="InterPro" id="IPR008179">
    <property type="entry name" value="HisE"/>
</dbReference>
<dbReference type="InterPro" id="IPR021130">
    <property type="entry name" value="PRib-ATP_PPHydrolase-like"/>
</dbReference>
<dbReference type="NCBIfam" id="TIGR03188">
    <property type="entry name" value="histidine_hisI"/>
    <property type="match status" value="1"/>
</dbReference>
<dbReference type="NCBIfam" id="NF001613">
    <property type="entry name" value="PRK00400.1-5"/>
    <property type="match status" value="1"/>
</dbReference>
<dbReference type="PANTHER" id="PTHR42945">
    <property type="entry name" value="HISTIDINE BIOSYNTHESIS BIFUNCTIONAL PROTEIN"/>
    <property type="match status" value="1"/>
</dbReference>
<dbReference type="PANTHER" id="PTHR42945:SF9">
    <property type="entry name" value="HISTIDINE BIOSYNTHESIS BIFUNCTIONAL PROTEIN HISIE"/>
    <property type="match status" value="1"/>
</dbReference>
<dbReference type="Pfam" id="PF01503">
    <property type="entry name" value="PRA-PH"/>
    <property type="match status" value="1"/>
</dbReference>
<dbReference type="SUPFAM" id="SSF101386">
    <property type="entry name" value="all-alpha NTP pyrophosphatases"/>
    <property type="match status" value="1"/>
</dbReference>
<proteinExistence type="inferred from homology"/>
<evidence type="ECO:0000255" key="1">
    <source>
        <dbReference type="HAMAP-Rule" id="MF_01020"/>
    </source>
</evidence>
<feature type="chain" id="PRO_0000230168" description="Phosphoribosyl-ATP pyrophosphatase">
    <location>
        <begin position="1"/>
        <end position="107"/>
    </location>
</feature>
<sequence>MSQFTLADLERIVAERASVTDGTSYTASLVAKGQPKAAQKLGEEAVETVIAAVSGDRAGVVSESADLLYHLAVVWNIAGVALEDVLQELQRRTAQTGLAEKASRPKG</sequence>